<keyword id="KW-0029">Amino-acid transport</keyword>
<keyword id="KW-0472">Membrane</keyword>
<keyword id="KW-1185">Reference proteome</keyword>
<keyword id="KW-0812">Transmembrane</keyword>
<keyword id="KW-1133">Transmembrane helix</keyword>
<keyword id="KW-0813">Transport</keyword>
<reference key="1">
    <citation type="journal article" date="2002" name="Nature">
        <title>The genome sequence of Schizosaccharomyces pombe.</title>
        <authorList>
            <person name="Wood V."/>
            <person name="Gwilliam R."/>
            <person name="Rajandream M.A."/>
            <person name="Lyne M.H."/>
            <person name="Lyne R."/>
            <person name="Stewart A."/>
            <person name="Sgouros J.G."/>
            <person name="Peat N."/>
            <person name="Hayles J."/>
            <person name="Baker S.G."/>
            <person name="Basham D."/>
            <person name="Bowman S."/>
            <person name="Brooks K."/>
            <person name="Brown D."/>
            <person name="Brown S."/>
            <person name="Chillingworth T."/>
            <person name="Churcher C.M."/>
            <person name="Collins M."/>
            <person name="Connor R."/>
            <person name="Cronin A."/>
            <person name="Davis P."/>
            <person name="Feltwell T."/>
            <person name="Fraser A."/>
            <person name="Gentles S."/>
            <person name="Goble A."/>
            <person name="Hamlin N."/>
            <person name="Harris D.E."/>
            <person name="Hidalgo J."/>
            <person name="Hodgson G."/>
            <person name="Holroyd S."/>
            <person name="Hornsby T."/>
            <person name="Howarth S."/>
            <person name="Huckle E.J."/>
            <person name="Hunt S."/>
            <person name="Jagels K."/>
            <person name="James K.D."/>
            <person name="Jones L."/>
            <person name="Jones M."/>
            <person name="Leather S."/>
            <person name="McDonald S."/>
            <person name="McLean J."/>
            <person name="Mooney P."/>
            <person name="Moule S."/>
            <person name="Mungall K.L."/>
            <person name="Murphy L.D."/>
            <person name="Niblett D."/>
            <person name="Odell C."/>
            <person name="Oliver K."/>
            <person name="O'Neil S."/>
            <person name="Pearson D."/>
            <person name="Quail M.A."/>
            <person name="Rabbinowitsch E."/>
            <person name="Rutherford K.M."/>
            <person name="Rutter S."/>
            <person name="Saunders D."/>
            <person name="Seeger K."/>
            <person name="Sharp S."/>
            <person name="Skelton J."/>
            <person name="Simmonds M.N."/>
            <person name="Squares R."/>
            <person name="Squares S."/>
            <person name="Stevens K."/>
            <person name="Taylor K."/>
            <person name="Taylor R.G."/>
            <person name="Tivey A."/>
            <person name="Walsh S.V."/>
            <person name="Warren T."/>
            <person name="Whitehead S."/>
            <person name="Woodward J.R."/>
            <person name="Volckaert G."/>
            <person name="Aert R."/>
            <person name="Robben J."/>
            <person name="Grymonprez B."/>
            <person name="Weltjens I."/>
            <person name="Vanstreels E."/>
            <person name="Rieger M."/>
            <person name="Schaefer M."/>
            <person name="Mueller-Auer S."/>
            <person name="Gabel C."/>
            <person name="Fuchs M."/>
            <person name="Duesterhoeft A."/>
            <person name="Fritzc C."/>
            <person name="Holzer E."/>
            <person name="Moestl D."/>
            <person name="Hilbert H."/>
            <person name="Borzym K."/>
            <person name="Langer I."/>
            <person name="Beck A."/>
            <person name="Lehrach H."/>
            <person name="Reinhardt R."/>
            <person name="Pohl T.M."/>
            <person name="Eger P."/>
            <person name="Zimmermann W."/>
            <person name="Wedler H."/>
            <person name="Wambutt R."/>
            <person name="Purnelle B."/>
            <person name="Goffeau A."/>
            <person name="Cadieu E."/>
            <person name="Dreano S."/>
            <person name="Gloux S."/>
            <person name="Lelaure V."/>
            <person name="Mottier S."/>
            <person name="Galibert F."/>
            <person name="Aves S.J."/>
            <person name="Xiang Z."/>
            <person name="Hunt C."/>
            <person name="Moore K."/>
            <person name="Hurst S.M."/>
            <person name="Lucas M."/>
            <person name="Rochet M."/>
            <person name="Gaillardin C."/>
            <person name="Tallada V.A."/>
            <person name="Garzon A."/>
            <person name="Thode G."/>
            <person name="Daga R.R."/>
            <person name="Cruzado L."/>
            <person name="Jimenez J."/>
            <person name="Sanchez M."/>
            <person name="del Rey F."/>
            <person name="Benito J."/>
            <person name="Dominguez A."/>
            <person name="Revuelta J.L."/>
            <person name="Moreno S."/>
            <person name="Armstrong J."/>
            <person name="Forsburg S.L."/>
            <person name="Cerutti L."/>
            <person name="Lowe T."/>
            <person name="McCombie W.R."/>
            <person name="Paulsen I."/>
            <person name="Potashkin J."/>
            <person name="Shpakovski G.V."/>
            <person name="Ussery D."/>
            <person name="Barrell B.G."/>
            <person name="Nurse P."/>
        </authorList>
    </citation>
    <scope>NUCLEOTIDE SEQUENCE [LARGE SCALE GENOMIC DNA]</scope>
    <source>
        <strain>972 / ATCC 24843</strain>
    </source>
</reference>
<evidence type="ECO:0000255" key="1"/>
<evidence type="ECO:0000305" key="2"/>
<name>YCV4_SCHPO</name>
<accession>O74543</accession>
<comment type="subcellular location">
    <subcellularLocation>
        <location evidence="2">Membrane</location>
        <topology evidence="2">Multi-pass membrane protein</topology>
    </subcellularLocation>
</comment>
<comment type="similarity">
    <text evidence="2">Belongs to the amino acid-polyamine-organocation (APC) superfamily.</text>
</comment>
<dbReference type="EMBL" id="CU329672">
    <property type="protein sequence ID" value="CAA20708.1"/>
    <property type="molecule type" value="Genomic_DNA"/>
</dbReference>
<dbReference type="PIR" id="T11710">
    <property type="entry name" value="T11710"/>
</dbReference>
<dbReference type="SMR" id="O74543"/>
<dbReference type="BioGRID" id="276142">
    <property type="interactions" value="19"/>
</dbReference>
<dbReference type="FunCoup" id="O74543">
    <property type="interactions" value="236"/>
</dbReference>
<dbReference type="STRING" id="284812.O74543"/>
<dbReference type="PaxDb" id="4896-SPCC777.04.1"/>
<dbReference type="EnsemblFungi" id="SPCC777.04.1">
    <property type="protein sequence ID" value="SPCC777.04.1:pep"/>
    <property type="gene ID" value="SPCC777.04"/>
</dbReference>
<dbReference type="KEGG" id="spo:2539583"/>
<dbReference type="PomBase" id="SPCC777.04"/>
<dbReference type="VEuPathDB" id="FungiDB:SPCC777.04"/>
<dbReference type="eggNOG" id="KOG1286">
    <property type="taxonomic scope" value="Eukaryota"/>
</dbReference>
<dbReference type="HOGENOM" id="CLU_007946_12_1_1"/>
<dbReference type="InParanoid" id="O74543"/>
<dbReference type="OMA" id="ILLPWGA"/>
<dbReference type="PhylomeDB" id="O74543"/>
<dbReference type="PRO" id="PR:O74543"/>
<dbReference type="Proteomes" id="UP000002485">
    <property type="component" value="Chromosome III"/>
</dbReference>
<dbReference type="GO" id="GO:0016020">
    <property type="term" value="C:membrane"/>
    <property type="evidence" value="ECO:0000318"/>
    <property type="project" value="GO_Central"/>
</dbReference>
<dbReference type="GO" id="GO:0015171">
    <property type="term" value="F:amino acid transmembrane transporter activity"/>
    <property type="evidence" value="ECO:0000318"/>
    <property type="project" value="GO_Central"/>
</dbReference>
<dbReference type="GO" id="GO:0003333">
    <property type="term" value="P:amino acid transmembrane transport"/>
    <property type="evidence" value="ECO:0000318"/>
    <property type="project" value="GO_Central"/>
</dbReference>
<dbReference type="FunFam" id="1.20.1740.10:FF:000006">
    <property type="entry name" value="General amino acid permease"/>
    <property type="match status" value="1"/>
</dbReference>
<dbReference type="Gene3D" id="1.20.1740.10">
    <property type="entry name" value="Amino acid/polyamine transporter I"/>
    <property type="match status" value="1"/>
</dbReference>
<dbReference type="InterPro" id="IPR004841">
    <property type="entry name" value="AA-permease/SLC12A_dom"/>
</dbReference>
<dbReference type="InterPro" id="IPR004840">
    <property type="entry name" value="Amino_acid_permease_CS"/>
</dbReference>
<dbReference type="InterPro" id="IPR050524">
    <property type="entry name" value="APC_YAT"/>
</dbReference>
<dbReference type="PANTHER" id="PTHR43341">
    <property type="entry name" value="AMINO ACID PERMEASE"/>
    <property type="match status" value="1"/>
</dbReference>
<dbReference type="PANTHER" id="PTHR43341:SF9">
    <property type="entry name" value="DICARBOXYLIC AMINO ACID PERMEASE"/>
    <property type="match status" value="1"/>
</dbReference>
<dbReference type="Pfam" id="PF00324">
    <property type="entry name" value="AA_permease"/>
    <property type="match status" value="1"/>
</dbReference>
<dbReference type="PIRSF" id="PIRSF006060">
    <property type="entry name" value="AA_transporter"/>
    <property type="match status" value="1"/>
</dbReference>
<dbReference type="PROSITE" id="PS00218">
    <property type="entry name" value="AMINO_ACID_PERMEASE_1"/>
    <property type="match status" value="1"/>
</dbReference>
<feature type="chain" id="PRO_0000054176" description="Uncharacterized amino-acid permease C777.04">
    <location>
        <begin position="1"/>
        <end position="521"/>
    </location>
</feature>
<feature type="transmembrane region" description="Helical" evidence="1">
    <location>
        <begin position="53"/>
        <end position="73"/>
    </location>
</feature>
<feature type="transmembrane region" description="Helical" evidence="1">
    <location>
        <begin position="78"/>
        <end position="98"/>
    </location>
</feature>
<feature type="transmembrane region" description="Helical" evidence="1">
    <location>
        <begin position="158"/>
        <end position="178"/>
    </location>
</feature>
<feature type="transmembrane region" description="Helical" evidence="1">
    <location>
        <begin position="186"/>
        <end position="206"/>
    </location>
</feature>
<feature type="transmembrane region" description="Helical" evidence="1">
    <location>
        <begin position="282"/>
        <end position="302"/>
    </location>
</feature>
<feature type="transmembrane region" description="Helical" evidence="1">
    <location>
        <begin position="336"/>
        <end position="356"/>
    </location>
</feature>
<feature type="transmembrane region" description="Helical" evidence="1">
    <location>
        <begin position="380"/>
        <end position="400"/>
    </location>
</feature>
<feature type="transmembrane region" description="Helical" evidence="1">
    <location>
        <begin position="407"/>
        <end position="427"/>
    </location>
</feature>
<feature type="transmembrane region" description="Helical" evidence="1">
    <location>
        <begin position="487"/>
        <end position="507"/>
    </location>
</feature>
<sequence length="521" mass="57235">MSSIKSKTIIEPSENDIEKGEVDFVSSSISNFEEAYEEGPSLKREFKSRHVNMISVAGAIGTGLVIGSGSALLKGGPGSLFIAYLMTGINLYVVLISLGEMAAFSSDDKGFSGFSSRYVDKALGFATGWNYFFKYAIVYPTNLTAVGIVIHYWRPDLNVGIWVAVFLVVILAINLLHVKYFGEVEFWLSAVKILVLVTLIITCIVITSGGTPVHHKIGFHYWRDPGAFAPYLVEGSTGRFLGFWACLVQSCFAYVGSEVVGIAFGEAPNPEKTIRKSSFQSLFRIATFYVIGVFVLGLCVPYDSDILSSNASKGNAAASPFVVAIKLAQIKVMPDVINACLLVFIISSANSDIYIGSRTLYALAKEGYAPKILMLQTKQGIPWVGCLVTSSFGLLAFMNTKSSSATIFGYFSSAVTVFGTINWINILLSYICYHRATIVQQIPTERIPFRSWGQPYIAYASLIFTGLITFFNGYNAFIHGFKYRSFITSYIGIAAYVIMILGWKFTFKAKRVTSSTVDFRK</sequence>
<proteinExistence type="inferred from homology"/>
<organism>
    <name type="scientific">Schizosaccharomyces pombe (strain 972 / ATCC 24843)</name>
    <name type="common">Fission yeast</name>
    <dbReference type="NCBI Taxonomy" id="284812"/>
    <lineage>
        <taxon>Eukaryota</taxon>
        <taxon>Fungi</taxon>
        <taxon>Dikarya</taxon>
        <taxon>Ascomycota</taxon>
        <taxon>Taphrinomycotina</taxon>
        <taxon>Schizosaccharomycetes</taxon>
        <taxon>Schizosaccharomycetales</taxon>
        <taxon>Schizosaccharomycetaceae</taxon>
        <taxon>Schizosaccharomyces</taxon>
    </lineage>
</organism>
<gene>
    <name type="ORF">SPCC777.04</name>
</gene>
<protein>
    <recommendedName>
        <fullName>Uncharacterized amino-acid permease C777.04</fullName>
    </recommendedName>
</protein>